<keyword id="KW-0249">Electron transport</keyword>
<keyword id="KW-0349">Heme</keyword>
<keyword id="KW-0408">Iron</keyword>
<keyword id="KW-0472">Membrane</keyword>
<keyword id="KW-0479">Metal-binding</keyword>
<keyword id="KW-0496">Mitochondrion</keyword>
<keyword id="KW-0999">Mitochondrion inner membrane</keyword>
<keyword id="KW-0679">Respiratory chain</keyword>
<keyword id="KW-0812">Transmembrane</keyword>
<keyword id="KW-1133">Transmembrane helix</keyword>
<keyword id="KW-0813">Transport</keyword>
<keyword id="KW-0830">Ubiquinone</keyword>
<reference key="1">
    <citation type="journal article" date="2006" name="Biol. J. Linn. Soc. Lond.">
        <title>The enigma of the landlocked Baikal and Caspian seals addressed through phylogeny of phocine mitochondrial sequences.</title>
        <authorList>
            <person name="Palo J.U."/>
            <person name="Vainola R."/>
        </authorList>
    </citation>
    <scope>NUCLEOTIDE SEQUENCE [GENOMIC DNA]</scope>
</reference>
<gene>
    <name type="primary">MT-CYB</name>
    <name type="synonym">COB</name>
    <name type="synonym">CYTB</name>
    <name type="synonym">MTCYB</name>
</gene>
<proteinExistence type="inferred from homology"/>
<feature type="chain" id="PRO_0000254844" description="Cytochrome b">
    <location>
        <begin position="1"/>
        <end position="379"/>
    </location>
</feature>
<feature type="transmembrane region" description="Helical" evidence="2">
    <location>
        <begin position="33"/>
        <end position="53"/>
    </location>
</feature>
<feature type="transmembrane region" description="Helical" evidence="2">
    <location>
        <begin position="77"/>
        <end position="98"/>
    </location>
</feature>
<feature type="transmembrane region" description="Helical" evidence="2">
    <location>
        <begin position="113"/>
        <end position="133"/>
    </location>
</feature>
<feature type="transmembrane region" description="Helical" evidence="2">
    <location>
        <begin position="178"/>
        <end position="198"/>
    </location>
</feature>
<feature type="transmembrane region" description="Helical" evidence="2">
    <location>
        <begin position="226"/>
        <end position="246"/>
    </location>
</feature>
<feature type="transmembrane region" description="Helical" evidence="2">
    <location>
        <begin position="288"/>
        <end position="308"/>
    </location>
</feature>
<feature type="transmembrane region" description="Helical" evidence="2">
    <location>
        <begin position="320"/>
        <end position="340"/>
    </location>
</feature>
<feature type="transmembrane region" description="Helical" evidence="2">
    <location>
        <begin position="347"/>
        <end position="367"/>
    </location>
</feature>
<feature type="binding site" description="axial binding residue" evidence="2">
    <location>
        <position position="83"/>
    </location>
    <ligand>
        <name>heme b</name>
        <dbReference type="ChEBI" id="CHEBI:60344"/>
        <label>b562</label>
    </ligand>
    <ligandPart>
        <name>Fe</name>
        <dbReference type="ChEBI" id="CHEBI:18248"/>
    </ligandPart>
</feature>
<feature type="binding site" description="axial binding residue" evidence="2">
    <location>
        <position position="97"/>
    </location>
    <ligand>
        <name>heme b</name>
        <dbReference type="ChEBI" id="CHEBI:60344"/>
        <label>b566</label>
    </ligand>
    <ligandPart>
        <name>Fe</name>
        <dbReference type="ChEBI" id="CHEBI:18248"/>
    </ligandPart>
</feature>
<feature type="binding site" description="axial binding residue" evidence="2">
    <location>
        <position position="182"/>
    </location>
    <ligand>
        <name>heme b</name>
        <dbReference type="ChEBI" id="CHEBI:60344"/>
        <label>b562</label>
    </ligand>
    <ligandPart>
        <name>Fe</name>
        <dbReference type="ChEBI" id="CHEBI:18248"/>
    </ligandPart>
</feature>
<feature type="binding site" description="axial binding residue" evidence="2">
    <location>
        <position position="196"/>
    </location>
    <ligand>
        <name>heme b</name>
        <dbReference type="ChEBI" id="CHEBI:60344"/>
        <label>b566</label>
    </ligand>
    <ligandPart>
        <name>Fe</name>
        <dbReference type="ChEBI" id="CHEBI:18248"/>
    </ligandPart>
</feature>
<feature type="binding site" evidence="2">
    <location>
        <position position="201"/>
    </location>
    <ligand>
        <name>a ubiquinone</name>
        <dbReference type="ChEBI" id="CHEBI:16389"/>
    </ligand>
</feature>
<dbReference type="EMBL" id="AY140978">
    <property type="protein sequence ID" value="AAN46150.1"/>
    <property type="molecule type" value="Genomic_DNA"/>
</dbReference>
<dbReference type="EMBL" id="AM181033">
    <property type="protein sequence ID" value="CAJ57104.1"/>
    <property type="molecule type" value="Genomic_DNA"/>
</dbReference>
<dbReference type="RefSeq" id="YP_778902.1">
    <property type="nucleotide sequence ID" value="NC_008431.1"/>
</dbReference>
<dbReference type="SMR" id="Q2TVN0"/>
<dbReference type="GeneID" id="4356508"/>
<dbReference type="CTD" id="4519"/>
<dbReference type="GO" id="GO:0005743">
    <property type="term" value="C:mitochondrial inner membrane"/>
    <property type="evidence" value="ECO:0007669"/>
    <property type="project" value="UniProtKB-SubCell"/>
</dbReference>
<dbReference type="GO" id="GO:0045275">
    <property type="term" value="C:respiratory chain complex III"/>
    <property type="evidence" value="ECO:0007669"/>
    <property type="project" value="InterPro"/>
</dbReference>
<dbReference type="GO" id="GO:0046872">
    <property type="term" value="F:metal ion binding"/>
    <property type="evidence" value="ECO:0007669"/>
    <property type="project" value="UniProtKB-KW"/>
</dbReference>
<dbReference type="GO" id="GO:0008121">
    <property type="term" value="F:ubiquinol-cytochrome-c reductase activity"/>
    <property type="evidence" value="ECO:0007669"/>
    <property type="project" value="InterPro"/>
</dbReference>
<dbReference type="GO" id="GO:0006122">
    <property type="term" value="P:mitochondrial electron transport, ubiquinol to cytochrome c"/>
    <property type="evidence" value="ECO:0007669"/>
    <property type="project" value="TreeGrafter"/>
</dbReference>
<dbReference type="CDD" id="cd00290">
    <property type="entry name" value="cytochrome_b_C"/>
    <property type="match status" value="1"/>
</dbReference>
<dbReference type="CDD" id="cd00284">
    <property type="entry name" value="Cytochrome_b_N"/>
    <property type="match status" value="1"/>
</dbReference>
<dbReference type="FunFam" id="1.20.810.10:FF:000002">
    <property type="entry name" value="Cytochrome b"/>
    <property type="match status" value="1"/>
</dbReference>
<dbReference type="Gene3D" id="1.20.810.10">
    <property type="entry name" value="Cytochrome Bc1 Complex, Chain C"/>
    <property type="match status" value="1"/>
</dbReference>
<dbReference type="InterPro" id="IPR005798">
    <property type="entry name" value="Cyt_b/b6_C"/>
</dbReference>
<dbReference type="InterPro" id="IPR036150">
    <property type="entry name" value="Cyt_b/b6_C_sf"/>
</dbReference>
<dbReference type="InterPro" id="IPR005797">
    <property type="entry name" value="Cyt_b/b6_N"/>
</dbReference>
<dbReference type="InterPro" id="IPR027387">
    <property type="entry name" value="Cytb/b6-like_sf"/>
</dbReference>
<dbReference type="InterPro" id="IPR030689">
    <property type="entry name" value="Cytochrome_b"/>
</dbReference>
<dbReference type="InterPro" id="IPR048260">
    <property type="entry name" value="Cytochrome_b_C_euk/bac"/>
</dbReference>
<dbReference type="InterPro" id="IPR048259">
    <property type="entry name" value="Cytochrome_b_N_euk/bac"/>
</dbReference>
<dbReference type="InterPro" id="IPR016174">
    <property type="entry name" value="Di-haem_cyt_TM"/>
</dbReference>
<dbReference type="PANTHER" id="PTHR19271">
    <property type="entry name" value="CYTOCHROME B"/>
    <property type="match status" value="1"/>
</dbReference>
<dbReference type="PANTHER" id="PTHR19271:SF16">
    <property type="entry name" value="CYTOCHROME B"/>
    <property type="match status" value="1"/>
</dbReference>
<dbReference type="Pfam" id="PF00032">
    <property type="entry name" value="Cytochrom_B_C"/>
    <property type="match status" value="1"/>
</dbReference>
<dbReference type="Pfam" id="PF00033">
    <property type="entry name" value="Cytochrome_B"/>
    <property type="match status" value="1"/>
</dbReference>
<dbReference type="PIRSF" id="PIRSF038885">
    <property type="entry name" value="COB"/>
    <property type="match status" value="1"/>
</dbReference>
<dbReference type="SUPFAM" id="SSF81648">
    <property type="entry name" value="a domain/subunit of cytochrome bc1 complex (Ubiquinol-cytochrome c reductase)"/>
    <property type="match status" value="1"/>
</dbReference>
<dbReference type="SUPFAM" id="SSF81342">
    <property type="entry name" value="Transmembrane di-heme cytochromes"/>
    <property type="match status" value="1"/>
</dbReference>
<dbReference type="PROSITE" id="PS51003">
    <property type="entry name" value="CYTB_CTER"/>
    <property type="match status" value="1"/>
</dbReference>
<dbReference type="PROSITE" id="PS51002">
    <property type="entry name" value="CYTB_NTER"/>
    <property type="match status" value="1"/>
</dbReference>
<geneLocation type="mitochondrion"/>
<evidence type="ECO:0000250" key="1"/>
<evidence type="ECO:0000250" key="2">
    <source>
        <dbReference type="UniProtKB" id="P00157"/>
    </source>
</evidence>
<evidence type="ECO:0000255" key="3">
    <source>
        <dbReference type="PROSITE-ProRule" id="PRU00967"/>
    </source>
</evidence>
<evidence type="ECO:0000255" key="4">
    <source>
        <dbReference type="PROSITE-ProRule" id="PRU00968"/>
    </source>
</evidence>
<protein>
    <recommendedName>
        <fullName>Cytochrome b</fullName>
    </recommendedName>
    <alternativeName>
        <fullName>Complex III subunit 3</fullName>
    </alternativeName>
    <alternativeName>
        <fullName>Complex III subunit III</fullName>
    </alternativeName>
    <alternativeName>
        <fullName>Cytochrome b-c1 complex subunit 3</fullName>
    </alternativeName>
    <alternativeName>
        <fullName>Ubiquinol-cytochrome-c reductase complex cytochrome b subunit</fullName>
    </alternativeName>
</protein>
<name>CYB_PUSCA</name>
<sequence length="379" mass="42617">MTNIRKTHPLMKIINSSFIDLPTPSNISAWWNFGSLLGICLILQILTGLFLAMHYTSDTTTAFSSVTHICRDVNYGWIIRYLHANGASMFFICLYMHVGRGLYYGSYTFTETWNIGIILLFTVMATAFMGYVLPWGQMSFWGATVITNLLSAIPYIGTDLVQWIWGGFSVDKATLTRFFAFHFILPFVVLALAAVHLLFLHETGSNNPSGITSDSDKIPFHPYYTIKDILGALLLILVLTLLVLFSPDLLGDPDNYIPANPLSTPPHIKPEWYFLFAYAILRSIPNKLGGVLALVLSILILAIMPLLHTSKQRGMMFRPISQCLFWLLVADLLTLTWIGGQPVEHPYITIGQLASILYFMILLVLMPIASIIENNILKW</sequence>
<accession>Q2TVN0</accession>
<comment type="function">
    <text evidence="2">Component of the ubiquinol-cytochrome c reductase complex (complex III or cytochrome b-c1 complex) that is part of the mitochondrial respiratory chain. The b-c1 complex mediates electron transfer from ubiquinol to cytochrome c. Contributes to the generation of a proton gradient across the mitochondrial membrane that is then used for ATP synthesis.</text>
</comment>
<comment type="cofactor">
    <cofactor evidence="2">
        <name>heme b</name>
        <dbReference type="ChEBI" id="CHEBI:60344"/>
    </cofactor>
    <text evidence="2">Binds 2 heme b groups non-covalently.</text>
</comment>
<comment type="subunit">
    <text evidence="2">The cytochrome bc1 complex contains 11 subunits: 3 respiratory subunits (MT-CYB, CYC1 and UQCRFS1), 2 core proteins (UQCRC1 and UQCRC2) and 6 low-molecular weight proteins (UQCRH/QCR6, UQCRB/QCR7, UQCRQ/QCR8, UQCR10/QCR9, UQCR11/QCR10 and a cleavage product of UQCRFS1). This cytochrome bc1 complex then forms a dimer.</text>
</comment>
<comment type="subcellular location">
    <subcellularLocation>
        <location evidence="2">Mitochondrion inner membrane</location>
        <topology evidence="2">Multi-pass membrane protein</topology>
    </subcellularLocation>
</comment>
<comment type="miscellaneous">
    <text evidence="1">Heme 1 (or BL or b562) is low-potential and absorbs at about 562 nm, and heme 2 (or BH or b566) is high-potential and absorbs at about 566 nm.</text>
</comment>
<comment type="similarity">
    <text evidence="3 4">Belongs to the cytochrome b family.</text>
</comment>
<comment type="caution">
    <text evidence="2">The full-length protein contains only eight transmembrane helices, not nine as predicted by bioinformatics tools.</text>
</comment>
<organism>
    <name type="scientific">Pusa caspica</name>
    <name type="common">Caspian seal</name>
    <name type="synonym">Phoca caspica</name>
    <dbReference type="NCBI Taxonomy" id="693431"/>
    <lineage>
        <taxon>Eukaryota</taxon>
        <taxon>Metazoa</taxon>
        <taxon>Chordata</taxon>
        <taxon>Craniata</taxon>
        <taxon>Vertebrata</taxon>
        <taxon>Euteleostomi</taxon>
        <taxon>Mammalia</taxon>
        <taxon>Eutheria</taxon>
        <taxon>Laurasiatheria</taxon>
        <taxon>Carnivora</taxon>
        <taxon>Caniformia</taxon>
        <taxon>Pinnipedia</taxon>
        <taxon>Phocidae</taxon>
        <taxon>Phocinae</taxon>
        <taxon>Pusa</taxon>
    </lineage>
</organism>